<sequence>MKVISNFQNKKILILGLAKSGEAAAKLLTKLGALVTVNDSKPFDQNPAAQALLEEGIKVICGSHPVELLDEDFEYMVKNPGIPYDNPMVKRALAKEIPILTEVELAYFVSEAPIIGITGSNGKTTTTTMIADVLNAGGQSALLSGNIGYPASKVVQKAIAGDTLVMELSSFQLVGVNAFRPHIAVITNLMPTHLDYHGSFEDYVAAKWMIQAQMTESDYLILNANQEISATLAKTTQATVIPFSTQKVVDGAYLKDGILYFKEQAIIAATDLGVPGSHNIENALATIAVAKLSGIADDIIAQCLSHFGGVKHRLQRVGQIKDITFYNDSKSTNILATQKALSGFDNSRLILIAGGLDRGNEFDDLVPDLLGLKQMIILGESAERMKRAANKAEVSYLEARNVAEATELAFKLAQTGDTILLSPANASWDMYPNFEVRGDEFLATFDCLRGDA</sequence>
<gene>
    <name type="primary">murD</name>
</gene>
<name>MURD_STRPY</name>
<protein>
    <recommendedName>
        <fullName>UDP-N-acetylmuramoylalanine--D-glutamate ligase</fullName>
        <ecNumber evidence="3">6.3.2.9</ecNumber>
    </recommendedName>
    <alternativeName>
        <fullName>D-glutamic acid-adding enzyme</fullName>
    </alternativeName>
    <alternativeName>
        <fullName>UDP-N-acetylmuramoyl-L-alanyl-D-glutamate synthetase</fullName>
    </alternativeName>
</protein>
<dbReference type="EC" id="6.3.2.9" evidence="3"/>
<dbReference type="EMBL" id="AF035938">
    <property type="protein sequence ID" value="AAC38404.1"/>
    <property type="molecule type" value="Genomic_DNA"/>
</dbReference>
<dbReference type="EMBL" id="AB030645">
    <property type="protein sequence ID" value="BAB16028.1"/>
    <property type="molecule type" value="Genomic_DNA"/>
</dbReference>
<dbReference type="PIR" id="JC6561">
    <property type="entry name" value="JC6561"/>
</dbReference>
<dbReference type="RefSeq" id="WP_011054713.1">
    <property type="nucleotide sequence ID" value="NZ_WWFO01000008.1"/>
</dbReference>
<dbReference type="SMR" id="P0C0D7"/>
<dbReference type="STRING" id="1314.SD89_06625"/>
<dbReference type="eggNOG" id="COG0771">
    <property type="taxonomic scope" value="Bacteria"/>
</dbReference>
<dbReference type="OMA" id="CSSFDMF"/>
<dbReference type="UniPathway" id="UPA00219"/>
<dbReference type="GO" id="GO:0005737">
    <property type="term" value="C:cytoplasm"/>
    <property type="evidence" value="ECO:0007669"/>
    <property type="project" value="UniProtKB-SubCell"/>
</dbReference>
<dbReference type="GO" id="GO:0005524">
    <property type="term" value="F:ATP binding"/>
    <property type="evidence" value="ECO:0007669"/>
    <property type="project" value="UniProtKB-UniRule"/>
</dbReference>
<dbReference type="GO" id="GO:0008764">
    <property type="term" value="F:UDP-N-acetylmuramoylalanine-D-glutamate ligase activity"/>
    <property type="evidence" value="ECO:0007669"/>
    <property type="project" value="UniProtKB-UniRule"/>
</dbReference>
<dbReference type="GO" id="GO:0051301">
    <property type="term" value="P:cell division"/>
    <property type="evidence" value="ECO:0007669"/>
    <property type="project" value="UniProtKB-KW"/>
</dbReference>
<dbReference type="GO" id="GO:0071555">
    <property type="term" value="P:cell wall organization"/>
    <property type="evidence" value="ECO:0007669"/>
    <property type="project" value="UniProtKB-KW"/>
</dbReference>
<dbReference type="GO" id="GO:0009252">
    <property type="term" value="P:peptidoglycan biosynthetic process"/>
    <property type="evidence" value="ECO:0007669"/>
    <property type="project" value="UniProtKB-UniRule"/>
</dbReference>
<dbReference type="GO" id="GO:0008360">
    <property type="term" value="P:regulation of cell shape"/>
    <property type="evidence" value="ECO:0007669"/>
    <property type="project" value="UniProtKB-KW"/>
</dbReference>
<dbReference type="Gene3D" id="3.90.190.20">
    <property type="entry name" value="Mur ligase, C-terminal domain"/>
    <property type="match status" value="1"/>
</dbReference>
<dbReference type="Gene3D" id="3.40.1190.10">
    <property type="entry name" value="Mur-like, catalytic domain"/>
    <property type="match status" value="1"/>
</dbReference>
<dbReference type="Gene3D" id="3.40.50.720">
    <property type="entry name" value="NAD(P)-binding Rossmann-like Domain"/>
    <property type="match status" value="1"/>
</dbReference>
<dbReference type="HAMAP" id="MF_00639">
    <property type="entry name" value="MurD"/>
    <property type="match status" value="1"/>
</dbReference>
<dbReference type="InterPro" id="IPR036565">
    <property type="entry name" value="Mur-like_cat_sf"/>
</dbReference>
<dbReference type="InterPro" id="IPR004101">
    <property type="entry name" value="Mur_ligase_C"/>
</dbReference>
<dbReference type="InterPro" id="IPR036615">
    <property type="entry name" value="Mur_ligase_C_dom_sf"/>
</dbReference>
<dbReference type="InterPro" id="IPR013221">
    <property type="entry name" value="Mur_ligase_cen"/>
</dbReference>
<dbReference type="InterPro" id="IPR005762">
    <property type="entry name" value="MurD"/>
</dbReference>
<dbReference type="NCBIfam" id="TIGR01087">
    <property type="entry name" value="murD"/>
    <property type="match status" value="1"/>
</dbReference>
<dbReference type="PANTHER" id="PTHR43692">
    <property type="entry name" value="UDP-N-ACETYLMURAMOYLALANINE--D-GLUTAMATE LIGASE"/>
    <property type="match status" value="1"/>
</dbReference>
<dbReference type="PANTHER" id="PTHR43692:SF1">
    <property type="entry name" value="UDP-N-ACETYLMURAMOYLALANINE--D-GLUTAMATE LIGASE"/>
    <property type="match status" value="1"/>
</dbReference>
<dbReference type="Pfam" id="PF02875">
    <property type="entry name" value="Mur_ligase_C"/>
    <property type="match status" value="1"/>
</dbReference>
<dbReference type="Pfam" id="PF08245">
    <property type="entry name" value="Mur_ligase_M"/>
    <property type="match status" value="1"/>
</dbReference>
<dbReference type="Pfam" id="PF21799">
    <property type="entry name" value="MurD-like_N"/>
    <property type="match status" value="1"/>
</dbReference>
<dbReference type="SUPFAM" id="SSF51984">
    <property type="entry name" value="MurCD N-terminal domain"/>
    <property type="match status" value="1"/>
</dbReference>
<dbReference type="SUPFAM" id="SSF53623">
    <property type="entry name" value="MurD-like peptide ligases, catalytic domain"/>
    <property type="match status" value="1"/>
</dbReference>
<dbReference type="SUPFAM" id="SSF53244">
    <property type="entry name" value="MurD-like peptide ligases, peptide-binding domain"/>
    <property type="match status" value="1"/>
</dbReference>
<feature type="chain" id="PRO_0000109098" description="UDP-N-acetylmuramoylalanine--D-glutamate ligase">
    <location>
        <begin position="1"/>
        <end position="452"/>
    </location>
</feature>
<feature type="binding site" evidence="2">
    <location>
        <begin position="119"/>
        <end position="125"/>
    </location>
    <ligand>
        <name>ATP</name>
        <dbReference type="ChEBI" id="CHEBI:30616"/>
    </ligand>
</feature>
<feature type="sequence conflict" description="In Ref. 2; BAB16028." evidence="4" ref="2">
    <original>Q</original>
    <variation>K</variation>
    <location>
        <position position="237"/>
    </location>
</feature>
<proteinExistence type="evidence at protein level"/>
<reference key="1">
    <citation type="journal article" date="1998" name="Gene">
        <title>Cloning and expression of Staphylococcus aureus and Streptococcus pyogenes murD genes encoding uridine diphosphate N-acetylmuramoyl-L-alanine:D-glutamate ligases.</title>
        <authorList>
            <person name="El-Sherbeini M."/>
            <person name="Geissler W.M."/>
            <person name="Pittman J."/>
            <person name="Yuan X."/>
            <person name="Wong K.K."/>
            <person name="Pompliano D.L."/>
        </authorList>
    </citation>
    <scope>NUCLEOTIDE SEQUENCE [GENOMIC DNA]</scope>
    <scope>CATALYTIC ACTIVITY</scope>
    <source>
        <strain>MB4439 / 740564</strain>
    </source>
</reference>
<reference key="2">
    <citation type="submission" date="1999-07" db="EMBL/GenBank/DDBJ databases">
        <title>A novel cloning method used arbitrarily primed PCR.</title>
        <authorList>
            <person name="Kyongsu H."/>
        </authorList>
    </citation>
    <scope>NUCLEOTIDE SEQUENCE [GENOMIC DNA] OF 14-452</scope>
    <source>
        <strain>Sv / Serotype M23</strain>
    </source>
</reference>
<comment type="function">
    <text evidence="1">Cell wall formation. Catalyzes the addition of glutamate to the nucleotide precursor UDP-N-acetylmuramoyl-L-alanine (UMA).</text>
</comment>
<comment type="catalytic activity">
    <reaction evidence="3">
        <text>UDP-N-acetyl-alpha-D-muramoyl-L-alanine + D-glutamate + ATP = UDP-N-acetyl-alpha-D-muramoyl-L-alanyl-D-glutamate + ADP + phosphate + H(+)</text>
        <dbReference type="Rhea" id="RHEA:16429"/>
        <dbReference type="ChEBI" id="CHEBI:15378"/>
        <dbReference type="ChEBI" id="CHEBI:29986"/>
        <dbReference type="ChEBI" id="CHEBI:30616"/>
        <dbReference type="ChEBI" id="CHEBI:43474"/>
        <dbReference type="ChEBI" id="CHEBI:83898"/>
        <dbReference type="ChEBI" id="CHEBI:83900"/>
        <dbReference type="ChEBI" id="CHEBI:456216"/>
        <dbReference type="EC" id="6.3.2.9"/>
    </reaction>
</comment>
<comment type="pathway">
    <text>Cell wall biogenesis; peptidoglycan biosynthesis.</text>
</comment>
<comment type="subcellular location">
    <subcellularLocation>
        <location evidence="1">Cytoplasm</location>
    </subcellularLocation>
</comment>
<comment type="similarity">
    <text evidence="4">Belongs to the MurCDEF family.</text>
</comment>
<keyword id="KW-0067">ATP-binding</keyword>
<keyword id="KW-0131">Cell cycle</keyword>
<keyword id="KW-0132">Cell division</keyword>
<keyword id="KW-0133">Cell shape</keyword>
<keyword id="KW-0961">Cell wall biogenesis/degradation</keyword>
<keyword id="KW-0963">Cytoplasm</keyword>
<keyword id="KW-0436">Ligase</keyword>
<keyword id="KW-0547">Nucleotide-binding</keyword>
<keyword id="KW-0573">Peptidoglycan synthesis</keyword>
<organism>
    <name type="scientific">Streptococcus pyogenes</name>
    <dbReference type="NCBI Taxonomy" id="1314"/>
    <lineage>
        <taxon>Bacteria</taxon>
        <taxon>Bacillati</taxon>
        <taxon>Bacillota</taxon>
        <taxon>Bacilli</taxon>
        <taxon>Lactobacillales</taxon>
        <taxon>Streptococcaceae</taxon>
        <taxon>Streptococcus</taxon>
    </lineage>
</organism>
<accession>P0C0D7</accession>
<accession>O68388</accession>
<accession>P61418</accession>
<accession>Q99YV3</accession>
<accession>Q9FB03</accession>
<evidence type="ECO:0000250" key="1"/>
<evidence type="ECO:0000255" key="2"/>
<evidence type="ECO:0000269" key="3">
    <source>
    </source>
</evidence>
<evidence type="ECO:0000305" key="4"/>